<name>RRN10_YEAST</name>
<organism>
    <name type="scientific">Saccharomyces cerevisiae (strain ATCC 204508 / S288c)</name>
    <name type="common">Baker's yeast</name>
    <dbReference type="NCBI Taxonomy" id="559292"/>
    <lineage>
        <taxon>Eukaryota</taxon>
        <taxon>Fungi</taxon>
        <taxon>Dikarya</taxon>
        <taxon>Ascomycota</taxon>
        <taxon>Saccharomycotina</taxon>
        <taxon>Saccharomycetes</taxon>
        <taxon>Saccharomycetales</taxon>
        <taxon>Saccharomycetaceae</taxon>
        <taxon>Saccharomyces</taxon>
    </lineage>
</organism>
<gene>
    <name type="primary">RRN10</name>
    <name type="ordered locus">YBL025W</name>
    <name type="ORF">YBL0426</name>
</gene>
<proteinExistence type="evidence at protein level"/>
<sequence length="145" mass="16505">MDRNVYEACSNIIKEFGTHVVSADEVLAEKIDNAVPIPFKTREEIDADVEKDRNEGVFEGNIIPDIDLRVVHYYATQLCLNKYPHLINAFDETSLITLGLLIEKWVKDYLTSIQTEQGRQSKVIGKGPCEFISKHIDYRHAPGNI</sequence>
<protein>
    <recommendedName>
        <fullName>RNA polymerase I-specific transcription initiation factor RRN10</fullName>
    </recommendedName>
</protein>
<comment type="function">
    <text evidence="3">Component of the UAF (upstream activation factor) complex which interacts with the upstream element of the RNA polymerase I promoter and forms a stable preinitiation complex. Together with SPT15/TBP UAF seems to stimulate basal transcription to a fully activated level.</text>
</comment>
<comment type="subunit">
    <text evidence="2">Component of the UAF (upstream activation factor) complex which consists of UAF30, RRN5, RRN9, RRN10, and histones H3 and H4.</text>
</comment>
<comment type="interaction">
    <interactant intactId="EBI-15998">
        <id>P38204</id>
    </interactant>
    <interactant intactId="EBI-15994">
        <id>P53437</id>
        <label>RRN9</label>
    </interactant>
    <organismsDiffer>false</organismsDiffer>
    <experiments>3</experiments>
</comment>
<comment type="subcellular location">
    <subcellularLocation>
        <location evidence="1">Nucleus</location>
        <location evidence="1">Nucleolus</location>
    </subcellularLocation>
</comment>
<dbReference type="EMBL" id="U43682">
    <property type="protein sequence ID" value="AAC49259.1"/>
    <property type="molecule type" value="Genomic_DNA"/>
</dbReference>
<dbReference type="EMBL" id="X77291">
    <property type="protein sequence ID" value="CAA54500.1"/>
    <property type="molecule type" value="Genomic_DNA"/>
</dbReference>
<dbReference type="EMBL" id="Z35786">
    <property type="protein sequence ID" value="CAA84844.1"/>
    <property type="molecule type" value="Genomic_DNA"/>
</dbReference>
<dbReference type="EMBL" id="AY558460">
    <property type="protein sequence ID" value="AAS56786.1"/>
    <property type="molecule type" value="Genomic_DNA"/>
</dbReference>
<dbReference type="EMBL" id="BK006936">
    <property type="protein sequence ID" value="DAA07095.1"/>
    <property type="molecule type" value="Genomic_DNA"/>
</dbReference>
<dbReference type="PIR" id="S45759">
    <property type="entry name" value="S45759"/>
</dbReference>
<dbReference type="RefSeq" id="NP_009528.1">
    <property type="nucleotide sequence ID" value="NM_001178265.1"/>
</dbReference>
<dbReference type="PDB" id="7Z0O">
    <property type="method" value="EM"/>
    <property type="resolution" value="2.80 A"/>
    <property type="chains" value="F=1-145"/>
</dbReference>
<dbReference type="PDBsum" id="7Z0O"/>
<dbReference type="EMDB" id="EMD-14428"/>
<dbReference type="SMR" id="P38204"/>
<dbReference type="BioGRID" id="32673">
    <property type="interactions" value="48"/>
</dbReference>
<dbReference type="ComplexPortal" id="CPX-1101">
    <property type="entry name" value="RNA polymerase I upstream activating factor complex"/>
</dbReference>
<dbReference type="DIP" id="DIP-1592N"/>
<dbReference type="FunCoup" id="P38204">
    <property type="interactions" value="69"/>
</dbReference>
<dbReference type="IntAct" id="P38204">
    <property type="interactions" value="27"/>
</dbReference>
<dbReference type="MINT" id="P38204"/>
<dbReference type="STRING" id="4932.YBL025W"/>
<dbReference type="iPTMnet" id="P38204"/>
<dbReference type="PaxDb" id="4932-YBL025W"/>
<dbReference type="PeptideAtlas" id="P38204"/>
<dbReference type="EnsemblFungi" id="YBL025W_mRNA">
    <property type="protein sequence ID" value="YBL025W"/>
    <property type="gene ID" value="YBL025W"/>
</dbReference>
<dbReference type="GeneID" id="852256"/>
<dbReference type="KEGG" id="sce:YBL025W"/>
<dbReference type="AGR" id="SGD:S000000121"/>
<dbReference type="SGD" id="S000000121">
    <property type="gene designation" value="RRN10"/>
</dbReference>
<dbReference type="VEuPathDB" id="FungiDB:YBL025W"/>
<dbReference type="eggNOG" id="ENOG502S1BQ">
    <property type="taxonomic scope" value="Eukaryota"/>
</dbReference>
<dbReference type="HOGENOM" id="CLU_122953_0_0_1"/>
<dbReference type="InParanoid" id="P38204"/>
<dbReference type="OMA" id="HLINCFD"/>
<dbReference type="OrthoDB" id="2565191at2759"/>
<dbReference type="BioCyc" id="YEAST:G3O-28928-MONOMER"/>
<dbReference type="BioGRID-ORCS" id="852256">
    <property type="hits" value="4 hits in 10 CRISPR screens"/>
</dbReference>
<dbReference type="PRO" id="PR:P38204"/>
<dbReference type="Proteomes" id="UP000002311">
    <property type="component" value="Chromosome II"/>
</dbReference>
<dbReference type="RNAct" id="P38204">
    <property type="molecule type" value="protein"/>
</dbReference>
<dbReference type="GO" id="GO:0005730">
    <property type="term" value="C:nucleolus"/>
    <property type="evidence" value="ECO:0000314"/>
    <property type="project" value="SGD"/>
</dbReference>
<dbReference type="GO" id="GO:0005634">
    <property type="term" value="C:nucleus"/>
    <property type="evidence" value="ECO:0000303"/>
    <property type="project" value="ComplexPortal"/>
</dbReference>
<dbReference type="GO" id="GO:0000500">
    <property type="term" value="C:RNA polymerase I upstream activating factor complex"/>
    <property type="evidence" value="ECO:0000314"/>
    <property type="project" value="SGD"/>
</dbReference>
<dbReference type="GO" id="GO:0001165">
    <property type="term" value="F:RNA polymerase I cis-regulatory region sequence-specific DNA binding"/>
    <property type="evidence" value="ECO:0000314"/>
    <property type="project" value="SGD"/>
</dbReference>
<dbReference type="GO" id="GO:0001181">
    <property type="term" value="F:RNA polymerase I general transcription initiation factor activity"/>
    <property type="evidence" value="ECO:0000314"/>
    <property type="project" value="SGD"/>
</dbReference>
<dbReference type="GO" id="GO:0042790">
    <property type="term" value="P:nucleolar large rRNA transcription by RNA polymerase I"/>
    <property type="evidence" value="ECO:0000314"/>
    <property type="project" value="ComplexPortal"/>
</dbReference>
<dbReference type="GO" id="GO:0045943">
    <property type="term" value="P:positive regulation of transcription by RNA polymerase I"/>
    <property type="evidence" value="ECO:0000314"/>
    <property type="project" value="ComplexPortal"/>
</dbReference>
<dbReference type="InterPro" id="IPR022793">
    <property type="entry name" value="Rrn10"/>
</dbReference>
<dbReference type="InterPro" id="IPR007898">
    <property type="entry name" value="Rrn10_Saccharomycetes"/>
</dbReference>
<dbReference type="PANTHER" id="PTHR28054">
    <property type="entry name" value="RNA POLYMERASE I-SPECIFIC TRANSCRIPTION INITIATION FACTOR RRN10"/>
    <property type="match status" value="1"/>
</dbReference>
<dbReference type="PANTHER" id="PTHR28054:SF1">
    <property type="entry name" value="RNA POLYMERASE I-SPECIFIC TRANSCRIPTION INITIATION FACTOR RRN10"/>
    <property type="match status" value="1"/>
</dbReference>
<dbReference type="Pfam" id="PF05234">
    <property type="entry name" value="UAF_Rrn10"/>
    <property type="match status" value="1"/>
</dbReference>
<dbReference type="PIRSF" id="PIRSF009867">
    <property type="entry name" value="UAF_Rrn10"/>
    <property type="match status" value="1"/>
</dbReference>
<evidence type="ECO:0000269" key="1">
    <source>
    </source>
</evidence>
<evidence type="ECO:0000269" key="2">
    <source>
    </source>
</evidence>
<evidence type="ECO:0000269" key="3">
    <source>
    </source>
</evidence>
<evidence type="ECO:0007829" key="4">
    <source>
        <dbReference type="PDB" id="7Z0O"/>
    </source>
</evidence>
<keyword id="KW-0002">3D-structure</keyword>
<keyword id="KW-0539">Nucleus</keyword>
<keyword id="KW-1185">Reference proteome</keyword>
<keyword id="KW-0804">Transcription</keyword>
<keyword id="KW-0805">Transcription regulation</keyword>
<accession>P38204</accession>
<accession>D6VPX5</accession>
<feature type="chain" id="PRO_0000097445" description="RNA polymerase I-specific transcription initiation factor RRN10">
    <location>
        <begin position="1"/>
        <end position="145"/>
    </location>
</feature>
<feature type="helix" evidence="4">
    <location>
        <begin position="5"/>
        <end position="8"/>
    </location>
</feature>
<feature type="helix" evidence="4">
    <location>
        <begin position="23"/>
        <end position="30"/>
    </location>
</feature>
<feature type="turn" evidence="4">
    <location>
        <begin position="31"/>
        <end position="33"/>
    </location>
</feature>
<feature type="helix" evidence="4">
    <location>
        <begin position="42"/>
        <end position="47"/>
    </location>
</feature>
<feature type="helix" evidence="4">
    <location>
        <begin position="50"/>
        <end position="54"/>
    </location>
</feature>
<feature type="helix" evidence="4">
    <location>
        <begin position="68"/>
        <end position="82"/>
    </location>
</feature>
<feature type="helix" evidence="4">
    <location>
        <begin position="84"/>
        <end position="86"/>
    </location>
</feature>
<feature type="helix" evidence="4">
    <location>
        <begin position="92"/>
        <end position="108"/>
    </location>
</feature>
<feature type="strand" evidence="4">
    <location>
        <begin position="112"/>
        <end position="115"/>
    </location>
</feature>
<feature type="strand" evidence="4">
    <location>
        <begin position="120"/>
        <end position="123"/>
    </location>
</feature>
<feature type="helix" evidence="4">
    <location>
        <begin position="126"/>
        <end position="131"/>
    </location>
</feature>
<feature type="turn" evidence="4">
    <location>
        <begin position="138"/>
        <end position="140"/>
    </location>
</feature>
<reference key="1">
    <citation type="journal article" date="1996" name="Genes Dev.">
        <title>Multiprotein transcription factor UAF interacts with the upstream element of the yeast RNA polymerase I promoter and forms a stable preinitiation complex.</title>
        <authorList>
            <person name="Keys D.A."/>
            <person name="Lee B.-S."/>
            <person name="Dodd J.A."/>
            <person name="Nguyen T.T."/>
            <person name="Vu L."/>
            <person name="Fantino E."/>
            <person name="Burson L.M."/>
            <person name="Nogi Y."/>
            <person name="Nomura M."/>
        </authorList>
    </citation>
    <scope>NUCLEOTIDE SEQUENCE [GENOMIC DNA]</scope>
    <scope>IDENTIFICATION IN THE UAF COMPLEX</scope>
    <source>
        <strain>NOY696</strain>
    </source>
</reference>
<reference key="2">
    <citation type="journal article" date="1994" name="Yeast">
        <title>Analysis of a 17.4 kb DNA segment of yeast chromosome II encompassing the ribosomal protein L19 as well as proteins with homologies to components of the hnRNP and snRNP complexes and to the human proliferation-associated p120 antigen.</title>
        <authorList>
            <person name="van Dyck L."/>
            <person name="Jonniaux J.-L."/>
            <person name="Barreiros T.D.M."/>
            <person name="Kleine K."/>
            <person name="Goffeau A."/>
        </authorList>
    </citation>
    <scope>NUCLEOTIDE SEQUENCE [GENOMIC DNA]</scope>
    <source>
        <strain>ATCC 204508 / S288c</strain>
    </source>
</reference>
<reference key="3">
    <citation type="journal article" date="1994" name="EMBO J.">
        <title>Complete DNA sequence of yeast chromosome II.</title>
        <authorList>
            <person name="Feldmann H."/>
            <person name="Aigle M."/>
            <person name="Aljinovic G."/>
            <person name="Andre B."/>
            <person name="Baclet M.C."/>
            <person name="Barthe C."/>
            <person name="Baur A."/>
            <person name="Becam A.-M."/>
            <person name="Biteau N."/>
            <person name="Boles E."/>
            <person name="Brandt T."/>
            <person name="Brendel M."/>
            <person name="Brueckner M."/>
            <person name="Bussereau F."/>
            <person name="Christiansen C."/>
            <person name="Contreras R."/>
            <person name="Crouzet M."/>
            <person name="Cziepluch C."/>
            <person name="Demolis N."/>
            <person name="Delaveau T."/>
            <person name="Doignon F."/>
            <person name="Domdey H."/>
            <person name="Duesterhus S."/>
            <person name="Dubois E."/>
            <person name="Dujon B."/>
            <person name="El Bakkoury M."/>
            <person name="Entian K.-D."/>
            <person name="Feuermann M."/>
            <person name="Fiers W."/>
            <person name="Fobo G.M."/>
            <person name="Fritz C."/>
            <person name="Gassenhuber J."/>
            <person name="Glansdorff N."/>
            <person name="Goffeau A."/>
            <person name="Grivell L.A."/>
            <person name="de Haan M."/>
            <person name="Hein C."/>
            <person name="Herbert C.J."/>
            <person name="Hollenberg C.P."/>
            <person name="Holmstroem K."/>
            <person name="Jacq C."/>
            <person name="Jacquet M."/>
            <person name="Jauniaux J.-C."/>
            <person name="Jonniaux J.-L."/>
            <person name="Kallesoee T."/>
            <person name="Kiesau P."/>
            <person name="Kirchrath L."/>
            <person name="Koetter P."/>
            <person name="Korol S."/>
            <person name="Liebl S."/>
            <person name="Logghe M."/>
            <person name="Lohan A.J.E."/>
            <person name="Louis E.J."/>
            <person name="Li Z.Y."/>
            <person name="Maat M.J."/>
            <person name="Mallet L."/>
            <person name="Mannhaupt G."/>
            <person name="Messenguy F."/>
            <person name="Miosga T."/>
            <person name="Molemans F."/>
            <person name="Mueller S."/>
            <person name="Nasr F."/>
            <person name="Obermaier B."/>
            <person name="Perea J."/>
            <person name="Pierard A."/>
            <person name="Piravandi E."/>
            <person name="Pohl F.M."/>
            <person name="Pohl T.M."/>
            <person name="Potier S."/>
            <person name="Proft M."/>
            <person name="Purnelle B."/>
            <person name="Ramezani Rad M."/>
            <person name="Rieger M."/>
            <person name="Rose M."/>
            <person name="Schaaff-Gerstenschlaeger I."/>
            <person name="Scherens B."/>
            <person name="Schwarzlose C."/>
            <person name="Skala J."/>
            <person name="Slonimski P.P."/>
            <person name="Smits P.H.M."/>
            <person name="Souciet J.-L."/>
            <person name="Steensma H.Y."/>
            <person name="Stucka R."/>
            <person name="Urrestarazu L.A."/>
            <person name="van der Aart Q.J.M."/>
            <person name="Van Dyck L."/>
            <person name="Vassarotti A."/>
            <person name="Vetter I."/>
            <person name="Vierendeels F."/>
            <person name="Vissers S."/>
            <person name="Wagner G."/>
            <person name="de Wergifosse P."/>
            <person name="Wolfe K.H."/>
            <person name="Zagulski M."/>
            <person name="Zimmermann F.K."/>
            <person name="Mewes H.-W."/>
            <person name="Kleine K."/>
        </authorList>
    </citation>
    <scope>NUCLEOTIDE SEQUENCE [LARGE SCALE GENOMIC DNA]</scope>
    <source>
        <strain>ATCC 204508 / S288c</strain>
    </source>
</reference>
<reference key="4">
    <citation type="journal article" date="2014" name="G3 (Bethesda)">
        <title>The reference genome sequence of Saccharomyces cerevisiae: Then and now.</title>
        <authorList>
            <person name="Engel S.R."/>
            <person name="Dietrich F.S."/>
            <person name="Fisk D.G."/>
            <person name="Binkley G."/>
            <person name="Balakrishnan R."/>
            <person name="Costanzo M.C."/>
            <person name="Dwight S.S."/>
            <person name="Hitz B.C."/>
            <person name="Karra K."/>
            <person name="Nash R.S."/>
            <person name="Weng S."/>
            <person name="Wong E.D."/>
            <person name="Lloyd P."/>
            <person name="Skrzypek M.S."/>
            <person name="Miyasato S.R."/>
            <person name="Simison M."/>
            <person name="Cherry J.M."/>
        </authorList>
    </citation>
    <scope>GENOME REANNOTATION</scope>
    <source>
        <strain>ATCC 204508 / S288c</strain>
    </source>
</reference>
<reference key="5">
    <citation type="journal article" date="2007" name="Genome Res.">
        <title>Approaching a complete repository of sequence-verified protein-encoding clones for Saccharomyces cerevisiae.</title>
        <authorList>
            <person name="Hu Y."/>
            <person name="Rolfs A."/>
            <person name="Bhullar B."/>
            <person name="Murthy T.V.S."/>
            <person name="Zhu C."/>
            <person name="Berger M.F."/>
            <person name="Camargo A.A."/>
            <person name="Kelley F."/>
            <person name="McCarron S."/>
            <person name="Jepson D."/>
            <person name="Richardson A."/>
            <person name="Raphael J."/>
            <person name="Moreira D."/>
            <person name="Taycher E."/>
            <person name="Zuo D."/>
            <person name="Mohr S."/>
            <person name="Kane M.F."/>
            <person name="Williamson J."/>
            <person name="Simpson A.J.G."/>
            <person name="Bulyk M.L."/>
            <person name="Harlow E."/>
            <person name="Marsischky G."/>
            <person name="Kolodner R.D."/>
            <person name="LaBaer J."/>
        </authorList>
    </citation>
    <scope>NUCLEOTIDE SEQUENCE [GENOMIC DNA]</scope>
    <source>
        <strain>ATCC 204508 / S288c</strain>
    </source>
</reference>
<reference key="6">
    <citation type="journal article" date="1998" name="J. Biol. Chem.">
        <title>Reconstitution of yeast RNA polymerase I transcription in vitro from purified components. TATA-binding protein is not required for basal transcription.</title>
        <authorList>
            <person name="Keener J."/>
            <person name="Josaitis C.A."/>
            <person name="Dodd J.A."/>
            <person name="Nomura M."/>
        </authorList>
    </citation>
    <scope>FUNCTION OF THE UAF COMPLEX</scope>
</reference>
<reference key="7">
    <citation type="journal article" date="2003" name="Nature">
        <title>Global analysis of protein localization in budding yeast.</title>
        <authorList>
            <person name="Huh W.-K."/>
            <person name="Falvo J.V."/>
            <person name="Gerke L.C."/>
            <person name="Carroll A.S."/>
            <person name="Howson R.W."/>
            <person name="Weissman J.S."/>
            <person name="O'Shea E.K."/>
        </authorList>
    </citation>
    <scope>SUBCELLULAR LOCATION [LARGE SCALE ANALYSIS]</scope>
</reference>